<dbReference type="EC" id="3.4.11.1" evidence="1"/>
<dbReference type="EC" id="3.4.11.10" evidence="1"/>
<dbReference type="EMBL" id="AE017220">
    <property type="protein sequence ID" value="AAX68239.1"/>
    <property type="molecule type" value="Genomic_DNA"/>
</dbReference>
<dbReference type="RefSeq" id="WP_000397158.1">
    <property type="nucleotide sequence ID" value="NC_006905.1"/>
</dbReference>
<dbReference type="SMR" id="Q57GC3"/>
<dbReference type="MEROPS" id="M17.003"/>
<dbReference type="KEGG" id="sec:SCH_4333"/>
<dbReference type="HOGENOM" id="CLU_013734_2_2_6"/>
<dbReference type="Proteomes" id="UP000000538">
    <property type="component" value="Chromosome"/>
</dbReference>
<dbReference type="GO" id="GO:0005737">
    <property type="term" value="C:cytoplasm"/>
    <property type="evidence" value="ECO:0007669"/>
    <property type="project" value="UniProtKB-SubCell"/>
</dbReference>
<dbReference type="GO" id="GO:0030145">
    <property type="term" value="F:manganese ion binding"/>
    <property type="evidence" value="ECO:0007669"/>
    <property type="project" value="UniProtKB-UniRule"/>
</dbReference>
<dbReference type="GO" id="GO:0070006">
    <property type="term" value="F:metalloaminopeptidase activity"/>
    <property type="evidence" value="ECO:0007669"/>
    <property type="project" value="InterPro"/>
</dbReference>
<dbReference type="GO" id="GO:0006508">
    <property type="term" value="P:proteolysis"/>
    <property type="evidence" value="ECO:0007669"/>
    <property type="project" value="UniProtKB-KW"/>
</dbReference>
<dbReference type="CDD" id="cd00433">
    <property type="entry name" value="Peptidase_M17"/>
    <property type="match status" value="1"/>
</dbReference>
<dbReference type="FunFam" id="3.40.220.10:FF:000001">
    <property type="entry name" value="Probable cytosol aminopeptidase"/>
    <property type="match status" value="1"/>
</dbReference>
<dbReference type="FunFam" id="3.40.630.10:FF:000004">
    <property type="entry name" value="Probable cytosol aminopeptidase"/>
    <property type="match status" value="1"/>
</dbReference>
<dbReference type="Gene3D" id="3.40.220.10">
    <property type="entry name" value="Leucine Aminopeptidase, subunit E, domain 1"/>
    <property type="match status" value="1"/>
</dbReference>
<dbReference type="Gene3D" id="3.40.630.10">
    <property type="entry name" value="Zn peptidases"/>
    <property type="match status" value="1"/>
</dbReference>
<dbReference type="HAMAP" id="MF_00181">
    <property type="entry name" value="Cytosol_peptidase_M17"/>
    <property type="match status" value="1"/>
</dbReference>
<dbReference type="InterPro" id="IPR011356">
    <property type="entry name" value="Leucine_aapep/pepB"/>
</dbReference>
<dbReference type="InterPro" id="IPR043472">
    <property type="entry name" value="Macro_dom-like"/>
</dbReference>
<dbReference type="InterPro" id="IPR000819">
    <property type="entry name" value="Peptidase_M17_C"/>
</dbReference>
<dbReference type="InterPro" id="IPR023042">
    <property type="entry name" value="Peptidase_M17_leu_NH2_pept"/>
</dbReference>
<dbReference type="InterPro" id="IPR008283">
    <property type="entry name" value="Peptidase_M17_N"/>
</dbReference>
<dbReference type="NCBIfam" id="NF002072">
    <property type="entry name" value="PRK00913.1-1"/>
    <property type="match status" value="1"/>
</dbReference>
<dbReference type="NCBIfam" id="NF002073">
    <property type="entry name" value="PRK00913.1-2"/>
    <property type="match status" value="1"/>
</dbReference>
<dbReference type="NCBIfam" id="NF002074">
    <property type="entry name" value="PRK00913.1-4"/>
    <property type="match status" value="1"/>
</dbReference>
<dbReference type="PANTHER" id="PTHR11963:SF23">
    <property type="entry name" value="CYTOSOL AMINOPEPTIDASE"/>
    <property type="match status" value="1"/>
</dbReference>
<dbReference type="PANTHER" id="PTHR11963">
    <property type="entry name" value="LEUCINE AMINOPEPTIDASE-RELATED"/>
    <property type="match status" value="1"/>
</dbReference>
<dbReference type="Pfam" id="PF00883">
    <property type="entry name" value="Peptidase_M17"/>
    <property type="match status" value="1"/>
</dbReference>
<dbReference type="Pfam" id="PF02789">
    <property type="entry name" value="Peptidase_M17_N"/>
    <property type="match status" value="1"/>
</dbReference>
<dbReference type="PRINTS" id="PR00481">
    <property type="entry name" value="LAMNOPPTDASE"/>
</dbReference>
<dbReference type="SUPFAM" id="SSF52949">
    <property type="entry name" value="Macro domain-like"/>
    <property type="match status" value="1"/>
</dbReference>
<dbReference type="SUPFAM" id="SSF53187">
    <property type="entry name" value="Zn-dependent exopeptidases"/>
    <property type="match status" value="1"/>
</dbReference>
<dbReference type="PROSITE" id="PS00631">
    <property type="entry name" value="CYTOSOL_AP"/>
    <property type="match status" value="1"/>
</dbReference>
<feature type="chain" id="PRO_1000019975" description="Probable cytosol aminopeptidase">
    <location>
        <begin position="1"/>
        <end position="503"/>
    </location>
</feature>
<feature type="active site" evidence="1">
    <location>
        <position position="282"/>
    </location>
</feature>
<feature type="active site" evidence="1">
    <location>
        <position position="356"/>
    </location>
</feature>
<feature type="binding site" evidence="1">
    <location>
        <position position="270"/>
    </location>
    <ligand>
        <name>Mn(2+)</name>
        <dbReference type="ChEBI" id="CHEBI:29035"/>
        <label>2</label>
    </ligand>
</feature>
<feature type="binding site" evidence="1">
    <location>
        <position position="275"/>
    </location>
    <ligand>
        <name>Mn(2+)</name>
        <dbReference type="ChEBI" id="CHEBI:29035"/>
        <label>1</label>
    </ligand>
</feature>
<feature type="binding site" evidence="1">
    <location>
        <position position="275"/>
    </location>
    <ligand>
        <name>Mn(2+)</name>
        <dbReference type="ChEBI" id="CHEBI:29035"/>
        <label>2</label>
    </ligand>
</feature>
<feature type="binding site" evidence="1">
    <location>
        <position position="293"/>
    </location>
    <ligand>
        <name>Mn(2+)</name>
        <dbReference type="ChEBI" id="CHEBI:29035"/>
        <label>2</label>
    </ligand>
</feature>
<feature type="binding site" evidence="1">
    <location>
        <position position="352"/>
    </location>
    <ligand>
        <name>Mn(2+)</name>
        <dbReference type="ChEBI" id="CHEBI:29035"/>
        <label>1</label>
    </ligand>
</feature>
<feature type="binding site" evidence="1">
    <location>
        <position position="354"/>
    </location>
    <ligand>
        <name>Mn(2+)</name>
        <dbReference type="ChEBI" id="CHEBI:29035"/>
        <label>1</label>
    </ligand>
</feature>
<feature type="binding site" evidence="1">
    <location>
        <position position="354"/>
    </location>
    <ligand>
        <name>Mn(2+)</name>
        <dbReference type="ChEBI" id="CHEBI:29035"/>
        <label>2</label>
    </ligand>
</feature>
<accession>Q57GC3</accession>
<sequence>MEFSVKSGSPEKQRSACIVVGVFEPRRLSPIAEQLDKISDGYISALLRRGELEGKPGQTLLLHHVPNVLSERILLIGCGKERELDERQYKQVIQKTINTLNDTGSMEAVCFLTELHVKGRNNYWKVRQAVETAKETLYSFDQLKTNKSEPRRPLRKMVFNVPTRRELTSGERAIQHGLAIAAGIKAAKDLGNMPPNICNAAYLASQARQLADSYSKNVITRVIGEQQMRELGMNAYLAVGHGSQNESLMSVIEYKGNPSEDARPIVLVGKGLTFDSGGISIKPSEGMDEMKYDMCGAAAVYGVMRMVAELQLPINVIGVLAGCENMPGGRAYRPGDVLTTMSGQTVEVLNTDAEGRLVLCDVLTYVERFEPEAVIDVATLTGACVIALGHHITGLMSNHNPLAHELIGASEQAGDRAWRLPLGDEFQEQLESNFADMANIGGRPGGAITAGCFLSRFTRKYNWAHLDIAGTAWRSGKAKGATGRPVALLSQFLLNRAGFNGEE</sequence>
<gene>
    <name evidence="1" type="primary">pepA</name>
    <name type="ordered locus">SCH_4333</name>
</gene>
<name>AMPA_SALCH</name>
<reference key="1">
    <citation type="journal article" date="2005" name="Nucleic Acids Res.">
        <title>The genome sequence of Salmonella enterica serovar Choleraesuis, a highly invasive and resistant zoonotic pathogen.</title>
        <authorList>
            <person name="Chiu C.-H."/>
            <person name="Tang P."/>
            <person name="Chu C."/>
            <person name="Hu S."/>
            <person name="Bao Q."/>
            <person name="Yu J."/>
            <person name="Chou Y.-Y."/>
            <person name="Wang H.-S."/>
            <person name="Lee Y.-S."/>
        </authorList>
    </citation>
    <scope>NUCLEOTIDE SEQUENCE [LARGE SCALE GENOMIC DNA]</scope>
    <source>
        <strain>SC-B67</strain>
    </source>
</reference>
<organism>
    <name type="scientific">Salmonella choleraesuis (strain SC-B67)</name>
    <dbReference type="NCBI Taxonomy" id="321314"/>
    <lineage>
        <taxon>Bacteria</taxon>
        <taxon>Pseudomonadati</taxon>
        <taxon>Pseudomonadota</taxon>
        <taxon>Gammaproteobacteria</taxon>
        <taxon>Enterobacterales</taxon>
        <taxon>Enterobacteriaceae</taxon>
        <taxon>Salmonella</taxon>
    </lineage>
</organism>
<proteinExistence type="inferred from homology"/>
<protein>
    <recommendedName>
        <fullName evidence="1">Probable cytosol aminopeptidase</fullName>
        <ecNumber evidence="1">3.4.11.1</ecNumber>
    </recommendedName>
    <alternativeName>
        <fullName evidence="1">Leucine aminopeptidase</fullName>
        <shortName evidence="1">LAP</shortName>
        <ecNumber evidence="1">3.4.11.10</ecNumber>
    </alternativeName>
    <alternativeName>
        <fullName evidence="1">Leucyl aminopeptidase</fullName>
    </alternativeName>
</protein>
<comment type="function">
    <text evidence="1">Presumably involved in the processing and regular turnover of intracellular proteins. Catalyzes the removal of unsubstituted N-terminal amino acids from various peptides.</text>
</comment>
<comment type="catalytic activity">
    <reaction evidence="1">
        <text>Release of an N-terminal amino acid, Xaa-|-Yaa-, in which Xaa is preferably Leu, but may be other amino acids including Pro although not Arg or Lys, and Yaa may be Pro. Amino acid amides and methyl esters are also readily hydrolyzed, but rates on arylamides are exceedingly low.</text>
        <dbReference type="EC" id="3.4.11.1"/>
    </reaction>
</comment>
<comment type="catalytic activity">
    <reaction evidence="1">
        <text>Release of an N-terminal amino acid, preferentially leucine, but not glutamic or aspartic acids.</text>
        <dbReference type="EC" id="3.4.11.10"/>
    </reaction>
</comment>
<comment type="cofactor">
    <cofactor evidence="1">
        <name>Mn(2+)</name>
        <dbReference type="ChEBI" id="CHEBI:29035"/>
    </cofactor>
    <text evidence="1">Binds 2 manganese ions per subunit.</text>
</comment>
<comment type="subcellular location">
    <subcellularLocation>
        <location evidence="1">Cytoplasm</location>
    </subcellularLocation>
</comment>
<comment type="similarity">
    <text evidence="1">Belongs to the peptidase M17 family.</text>
</comment>
<evidence type="ECO:0000255" key="1">
    <source>
        <dbReference type="HAMAP-Rule" id="MF_00181"/>
    </source>
</evidence>
<keyword id="KW-0031">Aminopeptidase</keyword>
<keyword id="KW-0963">Cytoplasm</keyword>
<keyword id="KW-0378">Hydrolase</keyword>
<keyword id="KW-0464">Manganese</keyword>
<keyword id="KW-0479">Metal-binding</keyword>
<keyword id="KW-0645">Protease</keyword>